<protein>
    <recommendedName>
        <fullName>Transcription factor SPT20 homolog</fullName>
    </recommendedName>
</protein>
<accession>Q5R724</accession>
<keyword id="KW-0217">Developmental protein</keyword>
<keyword id="KW-0306">Gastrulation</keyword>
<keyword id="KW-0597">Phosphoprotein</keyword>
<keyword id="KW-1185">Reference proteome</keyword>
<feature type="chain" id="PRO_0000187041" description="Transcription factor SPT20 homolog">
    <location>
        <begin position="1"/>
        <end position="522"/>
    </location>
</feature>
<feature type="region of interest" description="Disordered" evidence="4">
    <location>
        <begin position="361"/>
        <end position="380"/>
    </location>
</feature>
<feature type="region of interest" description="Disordered" evidence="4">
    <location>
        <begin position="408"/>
        <end position="522"/>
    </location>
</feature>
<feature type="compositionally biased region" description="Low complexity" evidence="4">
    <location>
        <begin position="412"/>
        <end position="425"/>
    </location>
</feature>
<feature type="compositionally biased region" description="Polar residues" evidence="4">
    <location>
        <begin position="433"/>
        <end position="442"/>
    </location>
</feature>
<feature type="compositionally biased region" description="Low complexity" evidence="4">
    <location>
        <begin position="458"/>
        <end position="467"/>
    </location>
</feature>
<feature type="compositionally biased region" description="Pro residues" evidence="4">
    <location>
        <begin position="481"/>
        <end position="492"/>
    </location>
</feature>
<feature type="compositionally biased region" description="Low complexity" evidence="4">
    <location>
        <begin position="506"/>
        <end position="522"/>
    </location>
</feature>
<feature type="modified residue" description="Phosphoserine" evidence="2">
    <location>
        <position position="284"/>
    </location>
</feature>
<feature type="modified residue" description="Phosphothreonine" evidence="3">
    <location>
        <position position="482"/>
    </location>
</feature>
<feature type="modified residue" description="Phosphoserine" evidence="3">
    <location>
        <position position="507"/>
    </location>
</feature>
<feature type="modified residue" description="Phosphoserine" evidence="2">
    <location>
        <position position="512"/>
    </location>
</feature>
<reference key="1">
    <citation type="submission" date="2004-11" db="EMBL/GenBank/DDBJ databases">
        <authorList>
            <consortium name="The German cDNA consortium"/>
        </authorList>
    </citation>
    <scope>NUCLEOTIDE SEQUENCE [LARGE SCALE MRNA]</scope>
    <source>
        <tissue>Brain cortex</tissue>
    </source>
</reference>
<gene>
    <name type="primary">SUPT20H</name>
    <name type="synonym">FAM48A</name>
</gene>
<comment type="function">
    <text evidence="1">Required for MAP kinase p38 (MAPK11, MAPK12, MAPK13 and/or MAPK14) activation during gastrulation. Required for down-regulation of E-cadherin during gastrulation by regulating E-cadherin protein level downstream from NCK-interacting kinase (NIK) and independently of the regulation of transcription by FGF signaling and Snail. Required for starvation-induced ATG9A trafficking during autophagy (By similarity).</text>
</comment>
<comment type="subunit">
    <text evidence="1">Interacts with ATG9A. Interacts with MAPK14 (By similarity).</text>
</comment>
<comment type="similarity">
    <text evidence="5">Belongs to the SPT20 family.</text>
</comment>
<dbReference type="EMBL" id="CR860298">
    <property type="protein sequence ID" value="CAH92436.1"/>
    <property type="molecule type" value="mRNA"/>
</dbReference>
<dbReference type="RefSeq" id="NP_001128975.1">
    <property type="nucleotide sequence ID" value="NM_001135503.1"/>
</dbReference>
<dbReference type="SMR" id="Q5R724"/>
<dbReference type="STRING" id="9601.ENSPPYP00000006026"/>
<dbReference type="GeneID" id="100190815"/>
<dbReference type="KEGG" id="pon:100190815"/>
<dbReference type="CTD" id="55578"/>
<dbReference type="eggNOG" id="ENOG502QS30">
    <property type="taxonomic scope" value="Eukaryota"/>
</dbReference>
<dbReference type="InParanoid" id="Q5R724"/>
<dbReference type="OrthoDB" id="1932706at2759"/>
<dbReference type="Proteomes" id="UP000001595">
    <property type="component" value="Unplaced"/>
</dbReference>
<dbReference type="GO" id="GO:0000124">
    <property type="term" value="C:SAGA complex"/>
    <property type="evidence" value="ECO:0007669"/>
    <property type="project" value="InterPro"/>
</dbReference>
<dbReference type="GO" id="GO:0003712">
    <property type="term" value="F:transcription coregulator activity"/>
    <property type="evidence" value="ECO:0007669"/>
    <property type="project" value="InterPro"/>
</dbReference>
<dbReference type="GO" id="GO:0007369">
    <property type="term" value="P:gastrulation"/>
    <property type="evidence" value="ECO:0007669"/>
    <property type="project" value="UniProtKB-KW"/>
</dbReference>
<dbReference type="GO" id="GO:0006357">
    <property type="term" value="P:regulation of transcription by RNA polymerase II"/>
    <property type="evidence" value="ECO:0007669"/>
    <property type="project" value="TreeGrafter"/>
</dbReference>
<dbReference type="InterPro" id="IPR021950">
    <property type="entry name" value="Spt20"/>
</dbReference>
<dbReference type="InterPro" id="IPR046468">
    <property type="entry name" value="Spt20-like_SEP"/>
</dbReference>
<dbReference type="PANTHER" id="PTHR13526">
    <property type="entry name" value="TRANSCRIPTION FACTOR SPT20 HOMOLOG"/>
    <property type="match status" value="1"/>
</dbReference>
<dbReference type="PANTHER" id="PTHR13526:SF18">
    <property type="entry name" value="TRANSCRIPTION FACTOR SPT20 HOMOLOG"/>
    <property type="match status" value="1"/>
</dbReference>
<dbReference type="Pfam" id="PF12090">
    <property type="entry name" value="Spt20_SEP"/>
    <property type="match status" value="1"/>
</dbReference>
<sequence length="522" mass="58850">MYIIESARQRPPKRKYLSSGRKSVFQKLYDLYIEECEKEPEVKKLRRNVNLLEKLVMQETLSCLVVNLYPGNEGYSLMLRGKNGSDSETIRLPYEEGELLEYLDAEELPPILVDLLEKSQVNIFHCGCVIAEIRDYRQSSNMKSPGYQSRHILLRPTMQTLICDVHSITSDNHKWTQEDKLLLESQLILATAEPLCLDPSIAVTCTANRLLYNKQKMNTRPMKRCFKRYSRSSLNRQQDLSHCPPPPQLRLLDFLQKRKERKAGQHYDLKISKAGNCVDMWKRSPCNLAIPSEVDVEKYAKVEKSIKSDDSQPTVWPAHDVKDDYVFECEASTQYQKTKLTILQSLGDPLYYGKIQPCKADEESDSQMSPSHSSTDDHSNWFIIGSKTDAERVVNQYQELVQNEAKCPVKMSHSSSGSASLSQVSPGKETEQTETVSVQSSVLGKGVKHRPPPIKLPSSSGNSSSGNYFSPQQTSSFLKSPTPPPSSKPPTIPRKSSVDLNQVSMLSPAALSPASSSQRHES</sequence>
<name>SP20H_PONAB</name>
<evidence type="ECO:0000250" key="1"/>
<evidence type="ECO:0000250" key="2">
    <source>
        <dbReference type="UniProtKB" id="Q7TT00"/>
    </source>
</evidence>
<evidence type="ECO:0000250" key="3">
    <source>
        <dbReference type="UniProtKB" id="Q8NEM7"/>
    </source>
</evidence>
<evidence type="ECO:0000256" key="4">
    <source>
        <dbReference type="SAM" id="MobiDB-lite"/>
    </source>
</evidence>
<evidence type="ECO:0000305" key="5"/>
<organism>
    <name type="scientific">Pongo abelii</name>
    <name type="common">Sumatran orangutan</name>
    <name type="synonym">Pongo pygmaeus abelii</name>
    <dbReference type="NCBI Taxonomy" id="9601"/>
    <lineage>
        <taxon>Eukaryota</taxon>
        <taxon>Metazoa</taxon>
        <taxon>Chordata</taxon>
        <taxon>Craniata</taxon>
        <taxon>Vertebrata</taxon>
        <taxon>Euteleostomi</taxon>
        <taxon>Mammalia</taxon>
        <taxon>Eutheria</taxon>
        <taxon>Euarchontoglires</taxon>
        <taxon>Primates</taxon>
        <taxon>Haplorrhini</taxon>
        <taxon>Catarrhini</taxon>
        <taxon>Hominidae</taxon>
        <taxon>Pongo</taxon>
    </lineage>
</organism>
<proteinExistence type="evidence at transcript level"/>